<feature type="chain" id="PRO_0000360774" description="Uncharacterized transcriptional regulatory protein YesN">
    <location>
        <begin position="1"/>
        <end position="368"/>
    </location>
</feature>
<feature type="domain" description="Response regulatory" evidence="2">
    <location>
        <begin position="3"/>
        <end position="120"/>
    </location>
</feature>
<feature type="domain" description="HTH araC/xylS-type" evidence="3">
    <location>
        <begin position="259"/>
        <end position="361"/>
    </location>
</feature>
<feature type="DNA-binding region" description="H-T-H motif" evidence="3">
    <location>
        <begin position="278"/>
        <end position="299"/>
    </location>
</feature>
<feature type="DNA-binding region" description="H-T-H motif" evidence="3">
    <location>
        <begin position="327"/>
        <end position="351"/>
    </location>
</feature>
<feature type="modified residue" description="4-aspartylphosphate" evidence="2">
    <location>
        <position position="55"/>
    </location>
</feature>
<reference key="1">
    <citation type="journal article" date="1997" name="Nature">
        <title>The complete genome sequence of the Gram-positive bacterium Bacillus subtilis.</title>
        <authorList>
            <person name="Kunst F."/>
            <person name="Ogasawara N."/>
            <person name="Moszer I."/>
            <person name="Albertini A.M."/>
            <person name="Alloni G."/>
            <person name="Azevedo V."/>
            <person name="Bertero M.G."/>
            <person name="Bessieres P."/>
            <person name="Bolotin A."/>
            <person name="Borchert S."/>
            <person name="Borriss R."/>
            <person name="Boursier L."/>
            <person name="Brans A."/>
            <person name="Braun M."/>
            <person name="Brignell S.C."/>
            <person name="Bron S."/>
            <person name="Brouillet S."/>
            <person name="Bruschi C.V."/>
            <person name="Caldwell B."/>
            <person name="Capuano V."/>
            <person name="Carter N.M."/>
            <person name="Choi S.-K."/>
            <person name="Codani J.-J."/>
            <person name="Connerton I.F."/>
            <person name="Cummings N.J."/>
            <person name="Daniel R.A."/>
            <person name="Denizot F."/>
            <person name="Devine K.M."/>
            <person name="Duesterhoeft A."/>
            <person name="Ehrlich S.D."/>
            <person name="Emmerson P.T."/>
            <person name="Entian K.-D."/>
            <person name="Errington J."/>
            <person name="Fabret C."/>
            <person name="Ferrari E."/>
            <person name="Foulger D."/>
            <person name="Fritz C."/>
            <person name="Fujita M."/>
            <person name="Fujita Y."/>
            <person name="Fuma S."/>
            <person name="Galizzi A."/>
            <person name="Galleron N."/>
            <person name="Ghim S.-Y."/>
            <person name="Glaser P."/>
            <person name="Goffeau A."/>
            <person name="Golightly E.J."/>
            <person name="Grandi G."/>
            <person name="Guiseppi G."/>
            <person name="Guy B.J."/>
            <person name="Haga K."/>
            <person name="Haiech J."/>
            <person name="Harwood C.R."/>
            <person name="Henaut A."/>
            <person name="Hilbert H."/>
            <person name="Holsappel S."/>
            <person name="Hosono S."/>
            <person name="Hullo M.-F."/>
            <person name="Itaya M."/>
            <person name="Jones L.-M."/>
            <person name="Joris B."/>
            <person name="Karamata D."/>
            <person name="Kasahara Y."/>
            <person name="Klaerr-Blanchard M."/>
            <person name="Klein C."/>
            <person name="Kobayashi Y."/>
            <person name="Koetter P."/>
            <person name="Koningstein G."/>
            <person name="Krogh S."/>
            <person name="Kumano M."/>
            <person name="Kurita K."/>
            <person name="Lapidus A."/>
            <person name="Lardinois S."/>
            <person name="Lauber J."/>
            <person name="Lazarevic V."/>
            <person name="Lee S.-M."/>
            <person name="Levine A."/>
            <person name="Liu H."/>
            <person name="Masuda S."/>
            <person name="Mauel C."/>
            <person name="Medigue C."/>
            <person name="Medina N."/>
            <person name="Mellado R.P."/>
            <person name="Mizuno M."/>
            <person name="Moestl D."/>
            <person name="Nakai S."/>
            <person name="Noback M."/>
            <person name="Noone D."/>
            <person name="O'Reilly M."/>
            <person name="Ogawa K."/>
            <person name="Ogiwara A."/>
            <person name="Oudega B."/>
            <person name="Park S.-H."/>
            <person name="Parro V."/>
            <person name="Pohl T.M."/>
            <person name="Portetelle D."/>
            <person name="Porwollik S."/>
            <person name="Prescott A.M."/>
            <person name="Presecan E."/>
            <person name="Pujic P."/>
            <person name="Purnelle B."/>
            <person name="Rapoport G."/>
            <person name="Rey M."/>
            <person name="Reynolds S."/>
            <person name="Rieger M."/>
            <person name="Rivolta C."/>
            <person name="Rocha E."/>
            <person name="Roche B."/>
            <person name="Rose M."/>
            <person name="Sadaie Y."/>
            <person name="Sato T."/>
            <person name="Scanlan E."/>
            <person name="Schleich S."/>
            <person name="Schroeter R."/>
            <person name="Scoffone F."/>
            <person name="Sekiguchi J."/>
            <person name="Sekowska A."/>
            <person name="Seror S.J."/>
            <person name="Serror P."/>
            <person name="Shin B.-S."/>
            <person name="Soldo B."/>
            <person name="Sorokin A."/>
            <person name="Tacconi E."/>
            <person name="Takagi T."/>
            <person name="Takahashi H."/>
            <person name="Takemaru K."/>
            <person name="Takeuchi M."/>
            <person name="Tamakoshi A."/>
            <person name="Tanaka T."/>
            <person name="Terpstra P."/>
            <person name="Tognoni A."/>
            <person name="Tosato V."/>
            <person name="Uchiyama S."/>
            <person name="Vandenbol M."/>
            <person name="Vannier F."/>
            <person name="Vassarotti A."/>
            <person name="Viari A."/>
            <person name="Wambutt R."/>
            <person name="Wedler E."/>
            <person name="Wedler H."/>
            <person name="Weitzenegger T."/>
            <person name="Winters P."/>
            <person name="Wipat A."/>
            <person name="Yamamoto H."/>
            <person name="Yamane K."/>
            <person name="Yasumoto K."/>
            <person name="Yata K."/>
            <person name="Yoshida K."/>
            <person name="Yoshikawa H.-F."/>
            <person name="Zumstein E."/>
            <person name="Yoshikawa H."/>
            <person name="Danchin A."/>
        </authorList>
    </citation>
    <scope>NUCLEOTIDE SEQUENCE [LARGE SCALE GENOMIC DNA]</scope>
    <source>
        <strain>168</strain>
    </source>
</reference>
<reference key="2">
    <citation type="journal article" date="2001" name="J. Bacteriol.">
        <title>Comprehensive DNA microarray analysis of Bacillus subtilis two-component regulatory systems.</title>
        <authorList>
            <person name="Kobayashi K."/>
            <person name="Ogura M."/>
            <person name="Yamaguchi H."/>
            <person name="Yoshida K."/>
            <person name="Ogasawara N."/>
            <person name="Tanaka T."/>
            <person name="Fujita Y."/>
        </authorList>
    </citation>
    <scope>FUNCTION</scope>
</reference>
<gene>
    <name type="primary">yesN</name>
    <name type="ordered locus">BSU06960</name>
</gene>
<proteinExistence type="inferred from homology"/>
<comment type="function">
    <text evidence="4">Member of the two-component regulatory system YesM/YesN.</text>
</comment>
<comment type="subcellular location">
    <subcellularLocation>
        <location evidence="5">Cytoplasm</location>
    </subcellularLocation>
</comment>
<comment type="PTM">
    <text evidence="1">Phosphorylated by YesM.</text>
</comment>
<name>YESN_BACSU</name>
<keyword id="KW-0963">Cytoplasm</keyword>
<keyword id="KW-0238">DNA-binding</keyword>
<keyword id="KW-0597">Phosphoprotein</keyword>
<keyword id="KW-1185">Reference proteome</keyword>
<keyword id="KW-0804">Transcription</keyword>
<keyword id="KW-0805">Transcription regulation</keyword>
<keyword id="KW-0902">Two-component regulatory system</keyword>
<evidence type="ECO:0000250" key="1"/>
<evidence type="ECO:0000255" key="2">
    <source>
        <dbReference type="PROSITE-ProRule" id="PRU00169"/>
    </source>
</evidence>
<evidence type="ECO:0000255" key="3">
    <source>
        <dbReference type="PROSITE-ProRule" id="PRU00593"/>
    </source>
</evidence>
<evidence type="ECO:0000269" key="4">
    <source>
    </source>
</evidence>
<evidence type="ECO:0000305" key="5"/>
<accession>O31517</accession>
<organism>
    <name type="scientific">Bacillus subtilis (strain 168)</name>
    <dbReference type="NCBI Taxonomy" id="224308"/>
    <lineage>
        <taxon>Bacteria</taxon>
        <taxon>Bacillati</taxon>
        <taxon>Bacillota</taxon>
        <taxon>Bacilli</taxon>
        <taxon>Bacillales</taxon>
        <taxon>Bacillaceae</taxon>
        <taxon>Bacillus</taxon>
    </lineage>
</organism>
<dbReference type="EMBL" id="AL009126">
    <property type="protein sequence ID" value="CAB12515.1"/>
    <property type="molecule type" value="Genomic_DNA"/>
</dbReference>
<dbReference type="PIR" id="E69796">
    <property type="entry name" value="E69796"/>
</dbReference>
<dbReference type="RefSeq" id="NP_388577.1">
    <property type="nucleotide sequence ID" value="NC_000964.3"/>
</dbReference>
<dbReference type="RefSeq" id="WP_003244566.1">
    <property type="nucleotide sequence ID" value="NZ_OZ025638.1"/>
</dbReference>
<dbReference type="SMR" id="O31517"/>
<dbReference type="FunCoup" id="O31517">
    <property type="interactions" value="141"/>
</dbReference>
<dbReference type="STRING" id="224308.BSU06960"/>
<dbReference type="PaxDb" id="224308-BSU06960"/>
<dbReference type="EnsemblBacteria" id="CAB12515">
    <property type="protein sequence ID" value="CAB12515"/>
    <property type="gene ID" value="BSU_06960"/>
</dbReference>
<dbReference type="GeneID" id="938764"/>
<dbReference type="KEGG" id="bsu:BSU06960"/>
<dbReference type="PATRIC" id="fig|224308.179.peg.756"/>
<dbReference type="eggNOG" id="COG2207">
    <property type="taxonomic scope" value="Bacteria"/>
</dbReference>
<dbReference type="eggNOG" id="COG4753">
    <property type="taxonomic scope" value="Bacteria"/>
</dbReference>
<dbReference type="InParanoid" id="O31517"/>
<dbReference type="OrthoDB" id="159632at2"/>
<dbReference type="PhylomeDB" id="O31517"/>
<dbReference type="BioCyc" id="BSUB:BSU06960-MONOMER"/>
<dbReference type="Proteomes" id="UP000001570">
    <property type="component" value="Chromosome"/>
</dbReference>
<dbReference type="GO" id="GO:0005737">
    <property type="term" value="C:cytoplasm"/>
    <property type="evidence" value="ECO:0007669"/>
    <property type="project" value="UniProtKB-SubCell"/>
</dbReference>
<dbReference type="GO" id="GO:0003700">
    <property type="term" value="F:DNA-binding transcription factor activity"/>
    <property type="evidence" value="ECO:0007669"/>
    <property type="project" value="InterPro"/>
</dbReference>
<dbReference type="GO" id="GO:0043565">
    <property type="term" value="F:sequence-specific DNA binding"/>
    <property type="evidence" value="ECO:0007669"/>
    <property type="project" value="InterPro"/>
</dbReference>
<dbReference type="GO" id="GO:0000160">
    <property type="term" value="P:phosphorelay signal transduction system"/>
    <property type="evidence" value="ECO:0007669"/>
    <property type="project" value="UniProtKB-KW"/>
</dbReference>
<dbReference type="CDD" id="cd17536">
    <property type="entry name" value="REC_YesN-like"/>
    <property type="match status" value="1"/>
</dbReference>
<dbReference type="Gene3D" id="3.40.50.2300">
    <property type="match status" value="1"/>
</dbReference>
<dbReference type="Gene3D" id="1.10.10.60">
    <property type="entry name" value="Homeodomain-like"/>
    <property type="match status" value="2"/>
</dbReference>
<dbReference type="InterPro" id="IPR011006">
    <property type="entry name" value="CheY-like_superfamily"/>
</dbReference>
<dbReference type="InterPro" id="IPR009057">
    <property type="entry name" value="Homeodomain-like_sf"/>
</dbReference>
<dbReference type="InterPro" id="IPR051552">
    <property type="entry name" value="HptR"/>
</dbReference>
<dbReference type="InterPro" id="IPR018060">
    <property type="entry name" value="HTH_AraC"/>
</dbReference>
<dbReference type="InterPro" id="IPR001789">
    <property type="entry name" value="Sig_transdc_resp-reg_receiver"/>
</dbReference>
<dbReference type="PANTHER" id="PTHR42713">
    <property type="entry name" value="HISTIDINE KINASE-RELATED"/>
    <property type="match status" value="1"/>
</dbReference>
<dbReference type="PANTHER" id="PTHR42713:SF3">
    <property type="entry name" value="TRANSCRIPTIONAL REGULATORY PROTEIN HPTR"/>
    <property type="match status" value="1"/>
</dbReference>
<dbReference type="Pfam" id="PF12833">
    <property type="entry name" value="HTH_18"/>
    <property type="match status" value="1"/>
</dbReference>
<dbReference type="Pfam" id="PF00072">
    <property type="entry name" value="Response_reg"/>
    <property type="match status" value="1"/>
</dbReference>
<dbReference type="SMART" id="SM00342">
    <property type="entry name" value="HTH_ARAC"/>
    <property type="match status" value="1"/>
</dbReference>
<dbReference type="SMART" id="SM00448">
    <property type="entry name" value="REC"/>
    <property type="match status" value="1"/>
</dbReference>
<dbReference type="SUPFAM" id="SSF52172">
    <property type="entry name" value="CheY-like"/>
    <property type="match status" value="1"/>
</dbReference>
<dbReference type="SUPFAM" id="SSF46689">
    <property type="entry name" value="Homeodomain-like"/>
    <property type="match status" value="1"/>
</dbReference>
<dbReference type="PROSITE" id="PS01124">
    <property type="entry name" value="HTH_ARAC_FAMILY_2"/>
    <property type="match status" value="1"/>
</dbReference>
<dbReference type="PROSITE" id="PS50110">
    <property type="entry name" value="RESPONSE_REGULATORY"/>
    <property type="match status" value="1"/>
</dbReference>
<sequence>MYKILLADDERIILDGMAGIIEWESLGASLIGKAQNGHEAYEKIVHKQPHIVITDVKMPGMDGLELIKKVSAVSPSVQFIVLSGFGEFEYAKEAMKYGVKHYLLKPCNEQQIISSLEEIIAELKRQDVHKKKTAHLKHELDHIRSFAADQYLEGLIAGVAQLSPPPSLAGKKIRLLILKGEQSIDAAAREALGSALTAVCSSGEWTVLAVEENAAEKVAEVFADRKMAISQAGELRHAGQLFRDTAEASGDLHGSAVISKMIRLIADELGNPNLSLKWAAKDMLFMNPDYLGKLFKQETGEKFSQYVTRVRLEHAMKQMKIRRDVSVSEIAEEIGFGDNPKYFSLVFKKYTGLTPSEFRRKQGGASAG</sequence>
<protein>
    <recommendedName>
        <fullName>Uncharacterized transcriptional regulatory protein YesN</fullName>
    </recommendedName>
</protein>